<sequence>MTTETFVKDVKPGLKNLSVLFIVLETGRVTKTKDGHEVRTCKVADKTGSINISVWDELGNFIQPGDIIRLSKGYASLFKGCLTLYTGRGGDLQKIGEFCMVYSEVPNFSEPNPEYIAQQSQSKQGQQESGTGTNNHNSSSPAPPASDLENGNGSNSSGPPAHQSTAPAHSASGRITRSQPNHSLPGAPNSVSNGKESRRTGKR</sequence>
<proteinExistence type="evidence at transcript level"/>
<accession>Q6DE02</accession>
<name>SOB1A_XENLA</name>
<organism>
    <name type="scientific">Xenopus laevis</name>
    <name type="common">African clawed frog</name>
    <dbReference type="NCBI Taxonomy" id="8355"/>
    <lineage>
        <taxon>Eukaryota</taxon>
        <taxon>Metazoa</taxon>
        <taxon>Chordata</taxon>
        <taxon>Craniata</taxon>
        <taxon>Vertebrata</taxon>
        <taxon>Euteleostomi</taxon>
        <taxon>Amphibia</taxon>
        <taxon>Batrachia</taxon>
        <taxon>Anura</taxon>
        <taxon>Pipoidea</taxon>
        <taxon>Pipidae</taxon>
        <taxon>Xenopodinae</taxon>
        <taxon>Xenopus</taxon>
        <taxon>Xenopus</taxon>
    </lineage>
</organism>
<gene>
    <name type="primary">nabp2-a</name>
    <name type="synonym">obfc2b-a</name>
    <name type="synonym">ssb1-a</name>
</gene>
<comment type="function">
    <text evidence="1">Component of the SOSS complex, a multiprotein complex that functions downstream of the MRN complex to promote DNA repair and G2/M checkpoint. In the SOSS complex, acts as a sensor of single-stranded DNA that binds to single-stranded DNA. The SOSS complex associates with DNA lesions and influences diverse endpoints in the cellular DNA damage response including cell-cycle checkpoint activation, recombinational repair and maintenance of genomic stability. Required for efficient homologous recombination-dependent repair of double-strand breaks (DSBs) (By similarity).</text>
</comment>
<comment type="subunit">
    <text evidence="1">Component of the SOSS complex, composed of soss-b (soss-b1/nabp2 or soss-b2/nabp1), soss-a/ints3 and soss-c/inip. SOSS complexes containing soss-b1/nabp2 are more abundant than complexes containing soss-b2/nabp1 (By similarity).</text>
</comment>
<comment type="subcellular location">
    <subcellularLocation>
        <location evidence="1">Nucleus</location>
    </subcellularLocation>
    <text evidence="1">Localizes to nuclear foci following DNA damage.</text>
</comment>
<comment type="similarity">
    <text evidence="3">Belongs to the SOSS-B family. SOSS-B1 subfamily.</text>
</comment>
<evidence type="ECO:0000250" key="1"/>
<evidence type="ECO:0000256" key="2">
    <source>
        <dbReference type="SAM" id="MobiDB-lite"/>
    </source>
</evidence>
<evidence type="ECO:0000305" key="3"/>
<reference key="1">
    <citation type="submission" date="2004-07" db="EMBL/GenBank/DDBJ databases">
        <authorList>
            <consortium name="NIH - Xenopus Gene Collection (XGC) project"/>
        </authorList>
    </citation>
    <scope>NUCLEOTIDE SEQUENCE [LARGE SCALE MRNA]</scope>
    <source>
        <tissue>Ovary</tissue>
    </source>
</reference>
<protein>
    <recommendedName>
        <fullName>SOSS complex subunit B1-A</fullName>
    </recommendedName>
    <alternativeName>
        <fullName>Nucleic acid-binding protein 2-A</fullName>
    </alternativeName>
    <alternativeName>
        <fullName>Oligonucleotide/oligosaccharide-binding fold-containing protein 2B-A</fullName>
    </alternativeName>
    <alternativeName>
        <fullName>Sensor of single-strand DNA complex subunit B1-A</fullName>
    </alternativeName>
    <alternativeName>
        <fullName>Sensor of ssDNA subunit B1-A</fullName>
        <shortName>SOSS-B1-A</shortName>
    </alternativeName>
    <alternativeName>
        <fullName>Single-stranded DNA-binding protein 1-A</fullName>
    </alternativeName>
</protein>
<feature type="chain" id="PRO_0000333962" description="SOSS complex subunit B1-A">
    <location>
        <begin position="1"/>
        <end position="203"/>
    </location>
</feature>
<feature type="DNA-binding region" description="OB">
    <location>
        <begin position="22"/>
        <end position="92"/>
    </location>
</feature>
<feature type="region of interest" description="Disordered" evidence="2">
    <location>
        <begin position="110"/>
        <end position="203"/>
    </location>
</feature>
<feature type="compositionally biased region" description="Low complexity" evidence="2">
    <location>
        <begin position="118"/>
        <end position="140"/>
    </location>
</feature>
<feature type="compositionally biased region" description="Polar residues" evidence="2">
    <location>
        <begin position="149"/>
        <end position="182"/>
    </location>
</feature>
<keyword id="KW-0227">DNA damage</keyword>
<keyword id="KW-0234">DNA repair</keyword>
<keyword id="KW-0238">DNA-binding</keyword>
<keyword id="KW-0539">Nucleus</keyword>
<keyword id="KW-1185">Reference proteome</keyword>
<dbReference type="EMBL" id="BC077346">
    <property type="protein sequence ID" value="AAH77346.1"/>
    <property type="molecule type" value="mRNA"/>
</dbReference>
<dbReference type="RefSeq" id="NP_001086717.1">
    <property type="nucleotide sequence ID" value="NM_001093248.1"/>
</dbReference>
<dbReference type="RefSeq" id="XP_018100604.1">
    <property type="nucleotide sequence ID" value="XM_018245115.1"/>
</dbReference>
<dbReference type="SMR" id="Q6DE02"/>
<dbReference type="DNASU" id="446552"/>
<dbReference type="GeneID" id="446552"/>
<dbReference type="KEGG" id="xla:446552"/>
<dbReference type="AGR" id="Xenbase:XB-GENE-985194"/>
<dbReference type="CTD" id="446552"/>
<dbReference type="Xenbase" id="XB-GENE-985194">
    <property type="gene designation" value="nabp2.L"/>
</dbReference>
<dbReference type="OMA" id="QSKAAQN"/>
<dbReference type="OrthoDB" id="295715at2759"/>
<dbReference type="Proteomes" id="UP000186698">
    <property type="component" value="Chromosome 2L"/>
</dbReference>
<dbReference type="Bgee" id="446552">
    <property type="expression patterns" value="Expressed in lung and 19 other cell types or tissues"/>
</dbReference>
<dbReference type="GO" id="GO:0005634">
    <property type="term" value="C:nucleus"/>
    <property type="evidence" value="ECO:0000250"/>
    <property type="project" value="UniProtKB"/>
</dbReference>
<dbReference type="GO" id="GO:0070876">
    <property type="term" value="C:SOSS complex"/>
    <property type="evidence" value="ECO:0000250"/>
    <property type="project" value="UniProtKB"/>
</dbReference>
<dbReference type="GO" id="GO:0003677">
    <property type="term" value="F:DNA binding"/>
    <property type="evidence" value="ECO:0000318"/>
    <property type="project" value="GO_Central"/>
</dbReference>
<dbReference type="GO" id="GO:0003697">
    <property type="term" value="F:single-stranded DNA binding"/>
    <property type="evidence" value="ECO:0000250"/>
    <property type="project" value="UniProtKB"/>
</dbReference>
<dbReference type="GO" id="GO:0006974">
    <property type="term" value="P:DNA damage response"/>
    <property type="evidence" value="ECO:0000250"/>
    <property type="project" value="UniProtKB"/>
</dbReference>
<dbReference type="GO" id="GO:0006281">
    <property type="term" value="P:DNA repair"/>
    <property type="evidence" value="ECO:0000250"/>
    <property type="project" value="UniProtKB"/>
</dbReference>
<dbReference type="GO" id="GO:0000724">
    <property type="term" value="P:double-strand break repair via homologous recombination"/>
    <property type="evidence" value="ECO:0000250"/>
    <property type="project" value="UniProtKB"/>
</dbReference>
<dbReference type="GO" id="GO:0044818">
    <property type="term" value="P:mitotic G2/M transition checkpoint"/>
    <property type="evidence" value="ECO:0000250"/>
    <property type="project" value="UniProtKB"/>
</dbReference>
<dbReference type="GO" id="GO:0010212">
    <property type="term" value="P:response to ionizing radiation"/>
    <property type="evidence" value="ECO:0000250"/>
    <property type="project" value="UniProtKB"/>
</dbReference>
<dbReference type="CDD" id="cd04491">
    <property type="entry name" value="SoSSB_OBF"/>
    <property type="match status" value="1"/>
</dbReference>
<dbReference type="FunFam" id="2.40.50.140:FF:000072">
    <property type="entry name" value="SOSS complex subunit B2"/>
    <property type="match status" value="1"/>
</dbReference>
<dbReference type="Gene3D" id="2.40.50.140">
    <property type="entry name" value="Nucleic acid-binding proteins"/>
    <property type="match status" value="1"/>
</dbReference>
<dbReference type="InterPro" id="IPR012340">
    <property type="entry name" value="NA-bd_OB-fold"/>
</dbReference>
<dbReference type="InterPro" id="IPR051231">
    <property type="entry name" value="SOSS-B"/>
</dbReference>
<dbReference type="PANTHER" id="PTHR13356">
    <property type="entry name" value="OB FOLD NUCLEIC ACID BINDING PROTEIN-RELATED"/>
    <property type="match status" value="1"/>
</dbReference>
<dbReference type="PANTHER" id="PTHR13356:SF3">
    <property type="entry name" value="SOSS COMPLEX SUBUNIT B1"/>
    <property type="match status" value="1"/>
</dbReference>
<dbReference type="SUPFAM" id="SSF50249">
    <property type="entry name" value="Nucleic acid-binding proteins"/>
    <property type="match status" value="1"/>
</dbReference>